<comment type="subcellular location">
    <subcellularLocation>
        <location evidence="1">Cell membrane</location>
        <topology evidence="1">Lipid-anchor</topology>
    </subcellularLocation>
</comment>
<protein>
    <recommendedName>
        <fullName>Uncharacterized lipoprotein SA2158</fullName>
    </recommendedName>
</protein>
<gene>
    <name type="ordered locus">SA2158</name>
</gene>
<reference key="1">
    <citation type="journal article" date="2001" name="Lancet">
        <title>Whole genome sequencing of meticillin-resistant Staphylococcus aureus.</title>
        <authorList>
            <person name="Kuroda M."/>
            <person name="Ohta T."/>
            <person name="Uchiyama I."/>
            <person name="Baba T."/>
            <person name="Yuzawa H."/>
            <person name="Kobayashi I."/>
            <person name="Cui L."/>
            <person name="Oguchi A."/>
            <person name="Aoki K."/>
            <person name="Nagai Y."/>
            <person name="Lian J.-Q."/>
            <person name="Ito T."/>
            <person name="Kanamori M."/>
            <person name="Matsumaru H."/>
            <person name="Maruyama A."/>
            <person name="Murakami H."/>
            <person name="Hosoyama A."/>
            <person name="Mizutani-Ui Y."/>
            <person name="Takahashi N.K."/>
            <person name="Sawano T."/>
            <person name="Inoue R."/>
            <person name="Kaito C."/>
            <person name="Sekimizu K."/>
            <person name="Hirakawa H."/>
            <person name="Kuhara S."/>
            <person name="Goto S."/>
            <person name="Yabuzaki J."/>
            <person name="Kanehisa M."/>
            <person name="Yamashita A."/>
            <person name="Oshima K."/>
            <person name="Furuya K."/>
            <person name="Yoshino C."/>
            <person name="Shiba T."/>
            <person name="Hattori M."/>
            <person name="Ogasawara N."/>
            <person name="Hayashi H."/>
            <person name="Hiramatsu K."/>
        </authorList>
    </citation>
    <scope>NUCLEOTIDE SEQUENCE [LARGE SCALE GENOMIC DNA]</scope>
    <source>
        <strain>N315</strain>
    </source>
</reference>
<reference key="2">
    <citation type="submission" date="2005-11" db="UniProtKB">
        <title>Shotgun proteomic analysis of total protein extract of S. aureus S30 versus N315.</title>
        <authorList>
            <person name="Stenz L."/>
        </authorList>
    </citation>
    <scope>IDENTIFICATION BY MASS SPECTROMETRY</scope>
</reference>
<reference key="3">
    <citation type="submission" date="2007-10" db="UniProtKB">
        <title>Shotgun proteomic analysis of total and membrane protein extracts of S. aureus strain N315.</title>
        <authorList>
            <person name="Vaezzadeh A.R."/>
            <person name="Deshusses J."/>
            <person name="Lescuyer P."/>
            <person name="Hochstrasser D.F."/>
        </authorList>
    </citation>
    <scope>IDENTIFICATION BY MASS SPECTROMETRY [LARGE SCALE ANALYSIS]</scope>
    <source>
        <strain>N315</strain>
    </source>
</reference>
<dbReference type="EMBL" id="BA000018">
    <property type="protein sequence ID" value="BAB43460.1"/>
    <property type="molecule type" value="Genomic_DNA"/>
</dbReference>
<dbReference type="PIR" id="C90037">
    <property type="entry name" value="C90037"/>
</dbReference>
<dbReference type="RefSeq" id="WP_000827010.1">
    <property type="nucleotide sequence ID" value="NC_002745.2"/>
</dbReference>
<dbReference type="EnsemblBacteria" id="BAB43460">
    <property type="protein sequence ID" value="BAB43460"/>
    <property type="gene ID" value="BAB43460"/>
</dbReference>
<dbReference type="KEGG" id="sau:SA2158"/>
<dbReference type="HOGENOM" id="CLU_088585_0_0_9"/>
<dbReference type="GO" id="GO:0005886">
    <property type="term" value="C:plasma membrane"/>
    <property type="evidence" value="ECO:0007669"/>
    <property type="project" value="UniProtKB-SubCell"/>
</dbReference>
<dbReference type="PROSITE" id="PS51257">
    <property type="entry name" value="PROKAR_LIPOPROTEIN"/>
    <property type="match status" value="1"/>
</dbReference>
<feature type="signal peptide" evidence="1">
    <location>
        <begin position="1"/>
        <end position="17"/>
    </location>
</feature>
<feature type="chain" id="PRO_0000296180" description="Uncharacterized lipoprotein SA2158">
    <location>
        <begin position="18"/>
        <end position="204"/>
    </location>
</feature>
<feature type="region of interest" description="Disordered" evidence="2">
    <location>
        <begin position="17"/>
        <end position="102"/>
    </location>
</feature>
<feature type="compositionally biased region" description="Basic and acidic residues" evidence="2">
    <location>
        <begin position="23"/>
        <end position="70"/>
    </location>
</feature>
<feature type="compositionally biased region" description="Low complexity" evidence="2">
    <location>
        <begin position="71"/>
        <end position="102"/>
    </location>
</feature>
<feature type="lipid moiety-binding region" description="N-palmitoyl cysteine" evidence="1">
    <location>
        <position position="18"/>
    </location>
</feature>
<feature type="lipid moiety-binding region" description="S-diacylglycerol cysteine" evidence="1">
    <location>
        <position position="18"/>
    </location>
</feature>
<organism>
    <name type="scientific">Staphylococcus aureus (strain N315)</name>
    <dbReference type="NCBI Taxonomy" id="158879"/>
    <lineage>
        <taxon>Bacteria</taxon>
        <taxon>Bacillati</taxon>
        <taxon>Bacillota</taxon>
        <taxon>Bacilli</taxon>
        <taxon>Bacillales</taxon>
        <taxon>Staphylococcaceae</taxon>
        <taxon>Staphylococcus</taxon>
    </lineage>
</organism>
<keyword id="KW-1003">Cell membrane</keyword>
<keyword id="KW-0449">Lipoprotein</keyword>
<keyword id="KW-0472">Membrane</keyword>
<keyword id="KW-0564">Palmitate</keyword>
<keyword id="KW-0732">Signal</keyword>
<evidence type="ECO:0000255" key="1">
    <source>
        <dbReference type="PROSITE-ProRule" id="PRU00303"/>
    </source>
</evidence>
<evidence type="ECO:0000256" key="2">
    <source>
        <dbReference type="SAM" id="MobiDB-lite"/>
    </source>
</evidence>
<sequence length="204" mass="22837">MKRLVTGLLALSLFLAACGQDSDQQKDSNKEKDDKAKTEQQDKKTNDSSKDKKDNKDDSKDVNKDNKDNSANDNQQQSNSNATNNDQNQTNNNQSSNNQKSSYVAPYYGQNAAPVARQIYPFNGNKTQALQQLPNFQTALNAANNEANKFGSNNKVYNDYSIEEHNGNYKYVFSFKDPNANGKYSIVTVDYTGQAMVTDPNYQQ</sequence>
<accession>Q7A3W5</accession>
<name>Y2158_STAAN</name>
<proteinExistence type="evidence at protein level"/>